<name>K1210_HUMAN</name>
<dbReference type="EMBL" id="AL441887">
    <property type="status" value="NOT_ANNOTATED_CDS"/>
    <property type="molecule type" value="Genomic_DNA"/>
</dbReference>
<dbReference type="EMBL" id="AL590376">
    <property type="status" value="NOT_ANNOTATED_CDS"/>
    <property type="molecule type" value="Genomic_DNA"/>
</dbReference>
<dbReference type="EMBL" id="AL772284">
    <property type="status" value="NOT_ANNOTATED_CDS"/>
    <property type="molecule type" value="Genomic_DNA"/>
</dbReference>
<dbReference type="EMBL" id="AB033036">
    <property type="protein sequence ID" value="BAA86524.1"/>
    <property type="molecule type" value="mRNA"/>
</dbReference>
<dbReference type="CCDS" id="CCDS48156.1"/>
<dbReference type="RefSeq" id="NP_065772.1">
    <property type="nucleotide sequence ID" value="NM_020721.1"/>
</dbReference>
<dbReference type="BioGRID" id="121551">
    <property type="interactions" value="2"/>
</dbReference>
<dbReference type="FunCoup" id="Q9ULL0">
    <property type="interactions" value="7"/>
</dbReference>
<dbReference type="IntAct" id="Q9ULL0">
    <property type="interactions" value="2"/>
</dbReference>
<dbReference type="STRING" id="9606.ENSP00000384670"/>
<dbReference type="GlyCosmos" id="Q9ULL0">
    <property type="glycosylation" value="3 sites, 1 glycan"/>
</dbReference>
<dbReference type="GlyGen" id="Q9ULL0">
    <property type="glycosylation" value="5 sites, 1 O-linked glycan (4 sites)"/>
</dbReference>
<dbReference type="iPTMnet" id="Q9ULL0"/>
<dbReference type="PhosphoSitePlus" id="Q9ULL0"/>
<dbReference type="BioMuta" id="KIAA1210"/>
<dbReference type="DMDM" id="262527575"/>
<dbReference type="jPOST" id="Q9ULL0"/>
<dbReference type="MassIVE" id="Q9ULL0"/>
<dbReference type="PaxDb" id="9606-ENSP00000384670"/>
<dbReference type="PeptideAtlas" id="Q9ULL0"/>
<dbReference type="ProteomicsDB" id="85067"/>
<dbReference type="Antibodypedia" id="63509">
    <property type="antibodies" value="12 antibodies from 7 providers"/>
</dbReference>
<dbReference type="DNASU" id="57481"/>
<dbReference type="Ensembl" id="ENST00000402510.2">
    <property type="protein sequence ID" value="ENSP00000384670.2"/>
    <property type="gene ID" value="ENSG00000250423.3"/>
</dbReference>
<dbReference type="GeneID" id="57481"/>
<dbReference type="KEGG" id="hsa:57481"/>
<dbReference type="UCSC" id="uc004era.4">
    <property type="organism name" value="human"/>
</dbReference>
<dbReference type="AGR" id="HGNC:29218"/>
<dbReference type="CTD" id="57481"/>
<dbReference type="DisGeNET" id="57481"/>
<dbReference type="GeneCards" id="KIAA1210"/>
<dbReference type="HGNC" id="HGNC:29218">
    <property type="gene designation" value="KIAA1210"/>
</dbReference>
<dbReference type="HPA" id="ENSG00000250423">
    <property type="expression patterns" value="Group enriched (epididymis, seminal vesicle, testis)"/>
</dbReference>
<dbReference type="MalaCards" id="KIAA1210"/>
<dbReference type="MIM" id="300995">
    <property type="type" value="gene"/>
</dbReference>
<dbReference type="neXtProt" id="NX_Q9ULL0"/>
<dbReference type="OpenTargets" id="ENSG00000250423"/>
<dbReference type="PharmGKB" id="PA164721837"/>
<dbReference type="VEuPathDB" id="HostDB:ENSG00000250423"/>
<dbReference type="eggNOG" id="ENOG502QXCA">
    <property type="taxonomic scope" value="Eukaryota"/>
</dbReference>
<dbReference type="GeneTree" id="ENSGT00940000163031"/>
<dbReference type="HOGENOM" id="CLU_002901_0_0_1"/>
<dbReference type="InParanoid" id="Q9ULL0"/>
<dbReference type="OMA" id="KFQPQMS"/>
<dbReference type="OrthoDB" id="8869651at2759"/>
<dbReference type="PAN-GO" id="Q9ULL0">
    <property type="GO annotations" value="0 GO annotations based on evolutionary models"/>
</dbReference>
<dbReference type="PhylomeDB" id="Q9ULL0"/>
<dbReference type="TreeFam" id="TF328810"/>
<dbReference type="PathwayCommons" id="Q9ULL0"/>
<dbReference type="BioGRID-ORCS" id="57481">
    <property type="hits" value="7 hits in 764 CRISPR screens"/>
</dbReference>
<dbReference type="ChiTaRS" id="KIAA1210">
    <property type="organism name" value="human"/>
</dbReference>
<dbReference type="GenomeRNAi" id="57481"/>
<dbReference type="Pharos" id="Q9ULL0">
    <property type="development level" value="Tdark"/>
</dbReference>
<dbReference type="PRO" id="PR:Q9ULL0"/>
<dbReference type="Proteomes" id="UP000005640">
    <property type="component" value="Chromosome X"/>
</dbReference>
<dbReference type="RNAct" id="Q9ULL0">
    <property type="molecule type" value="protein"/>
</dbReference>
<dbReference type="Bgee" id="ENSG00000250423">
    <property type="expression patterns" value="Expressed in cauda epididymis and 37 other cell types or tissues"/>
</dbReference>
<dbReference type="GO" id="GO:0001669">
    <property type="term" value="C:acrosomal vesicle"/>
    <property type="evidence" value="ECO:0000250"/>
    <property type="project" value="UniProtKB"/>
</dbReference>
<dbReference type="InterPro" id="IPR026713">
    <property type="entry name" value="CRACD-like"/>
</dbReference>
<dbReference type="InterPro" id="IPR028030">
    <property type="entry name" value="DUF4592"/>
</dbReference>
<dbReference type="PANTHER" id="PTHR47743:SF2">
    <property type="entry name" value="ACROSOMAL PROTEIN KIAA1210"/>
    <property type="match status" value="1"/>
</dbReference>
<dbReference type="PANTHER" id="PTHR47743">
    <property type="entry name" value="KIAA1210 / KIAA1211 FAMILY MEMBER"/>
    <property type="match status" value="1"/>
</dbReference>
<dbReference type="Pfam" id="PF15262">
    <property type="entry name" value="DUF4592"/>
    <property type="match status" value="1"/>
</dbReference>
<keyword id="KW-0968">Cytoplasmic vesicle</keyword>
<keyword id="KW-1267">Proteomics identification</keyword>
<keyword id="KW-1185">Reference proteome</keyword>
<gene>
    <name evidence="5 7" type="primary">KIAA1210</name>
</gene>
<sequence length="1709" mass="187021">MRAGWTPRGFSAFHASLLPGRHPYLAHLGPRDRGARIGSRAYSQGCCSCLWLTYKGKKEGSTKGELGPAAVTDLEIPSYSRGFLPCTPRFPTTWCRGPGCFCGTAVIAGNLGDLARIVGPSHHASQLLLLQEQDSGNHPTMAESLSEISDSLDVLEAGDEGKKKCKFKALKSFFVKKKEKEAEDTQEEEMLELSLSSSNINISSLQPVRENQPTKARAKSSMGSKALSHDSIFMLGPEPERSASKMFPSMDPQRGRPQQRSHISRTLPKPRSKVPGVVSGAMSGAVLQNVPTSAVWVAGPKITENPPSRRRRLSIIPPVIQPEIISKNLVEISLDDESPKNPQKKALPHKSLTATQSFSELSSGPDCSQSLTAFATLASTSSTQLPIGFSTPATTQGCLDSSAARHKMTLNPRKQKKNLQVIIRGLPVWFSHFQGILEGSLQCVTQTLETPNLDEPLPVEPKEEEPNLPLVSEEEKSITKPKEINEKKLGMDSADSSSQKQNNKTEMYDKKTTDQAPNTDASRSQGYPMSAAYGRRWRRKGASVSGLSGCEFKGRSLKQSSEGYGLGDRAGSSPTNKTARNVPFSHLSLEKDNMEQPTTSQPETTTPQGLLSDKDDMGRRNAGIDFGSRKASAAQPIPENMDNSMVSDPQPYHEDAASGAEKTEARASLSLMVESLSTTQEEAILSVAAEAQVFMNPSHIQLEDQEAFSFDLQKAQSKMESAQDVQTICKEKPSGNVHQTFTASVLGMTSTTAKGDVYAKTLPPRSLFQSSRKPDAEEVSSDSENIPEEGDGSEELAHGHSSQSLGKFEDEQEVFSESKSFVEDLSSSEEELDLRCLSQALEEPEDAEVFTESSSYVEKYNTSDDCSSSEEDLPLRHPAQALGKPKNQQEVSSASNNTPEEQNDFMQQLPSRCPSQPIMNPTVQQQVPTSSVGTSIKQSDSVEPIPPRHPFQPWVNPKVEQEVSSSPKSMAVEESISMKPLPPKLLCQPLMNPKVQQNMFSGSEDIAVERVISVEPLLPRYSPQSLTDPQIRQISESTAVEEGTYVEPLPPRCLSQPSERPKFLDSMSTSAEWSSPVAPTPSKYTSPPWVTPKFEELYQLSAHPESTTVEEDISKEQLLPRHLSQLTVGNKVQQLSSNFERAAIEADISGSPLPPQYATQFLKRSKVQEMTSRLEKMAVEGTSNKSPIPRRPTQSFVKFMAQQIFSESSALKRGSDVAPLPPNLPSKSLSKPEVKHQVFSDSGSANPKGGISSKMLPMKHPLQSLGRPEDPQKVFSYSERAPGKCSSFKEQLSPRQLSQALRKPEYEQKVSPVSASSPKEWRNSKKQLPPKHSSQASDRSKFQPQMSSKGPVNVPVKQSSGEKHLPSSSPFQQQVHSSSVNAAARRSVFESNSDNWFLGRDEAFAIKTKKFSQGSKNPIKSIPAPATKPGKFTIAPVRQTSTSGGIYSKKEDLESGDGNNNQHANLSNQDDVEKLFGVRLKRAPPSQKYKSEKQDNFTQLASVPSGPISSSVGRGHKIRSTSQGLLDAAGNLTKISYVADKQQSRPKSESMAKKQPACKTPGKPAGQQSDYAVSEPVWITMAKQKQKSFKAHISVKELKTKSNAGADAETKEPKYEGAGSANENQPKKMFTSSVHKQEKTAQMKPPKPTKSVGFEAQKILQVPAMEKETKRSSTLPAKFQNPVEPIEPVWFSLARKKAKAWSHMAEITQ</sequence>
<protein>
    <recommendedName>
        <fullName evidence="6">Acrosomal protein KIAA1210</fullName>
    </recommendedName>
</protein>
<accession>Q9ULL0</accession>
<accession>B7ZCI8</accession>
<accession>Q5JPN4</accession>
<evidence type="ECO:0000250" key="1">
    <source>
        <dbReference type="UniProtKB" id="E9Q0C6"/>
    </source>
</evidence>
<evidence type="ECO:0000256" key="2">
    <source>
        <dbReference type="SAM" id="MobiDB-lite"/>
    </source>
</evidence>
<evidence type="ECO:0000269" key="3">
    <source>
    </source>
</evidence>
<evidence type="ECO:0000269" key="4">
    <source>
    </source>
</evidence>
<evidence type="ECO:0000303" key="5">
    <source>
    </source>
</evidence>
<evidence type="ECO:0000305" key="6"/>
<evidence type="ECO:0000312" key="7">
    <source>
        <dbReference type="HGNC" id="HGNC:29218"/>
    </source>
</evidence>
<feature type="chain" id="PRO_0000050790" description="Acrosomal protein KIAA1210">
    <location>
        <begin position="1"/>
        <end position="1709"/>
    </location>
</feature>
<feature type="region of interest" description="Disordered" evidence="2">
    <location>
        <begin position="207"/>
        <end position="226"/>
    </location>
</feature>
<feature type="region of interest" description="Disordered" evidence="2">
    <location>
        <begin position="239"/>
        <end position="275"/>
    </location>
</feature>
<feature type="region of interest" description="Disordered" evidence="2">
    <location>
        <begin position="451"/>
        <end position="663"/>
    </location>
</feature>
<feature type="region of interest" description="Disordered" evidence="2">
    <location>
        <begin position="763"/>
        <end position="973"/>
    </location>
</feature>
<feature type="region of interest" description="Disordered" evidence="2">
    <location>
        <begin position="1211"/>
        <end position="1382"/>
    </location>
</feature>
<feature type="region of interest" description="Disordered" evidence="2">
    <location>
        <begin position="1408"/>
        <end position="1516"/>
    </location>
</feature>
<feature type="region of interest" description="Disordered" evidence="2">
    <location>
        <begin position="1539"/>
        <end position="1571"/>
    </location>
</feature>
<feature type="region of interest" description="Disordered" evidence="2">
    <location>
        <begin position="1589"/>
        <end position="1653"/>
    </location>
</feature>
<feature type="compositionally biased region" description="Basic residues" evidence="2">
    <location>
        <begin position="257"/>
        <end position="272"/>
    </location>
</feature>
<feature type="compositionally biased region" description="Basic and acidic residues" evidence="2">
    <location>
        <begin position="473"/>
        <end position="490"/>
    </location>
</feature>
<feature type="compositionally biased region" description="Polar residues" evidence="2">
    <location>
        <begin position="494"/>
        <end position="505"/>
    </location>
</feature>
<feature type="compositionally biased region" description="Polar residues" evidence="2">
    <location>
        <begin position="514"/>
        <end position="527"/>
    </location>
</feature>
<feature type="compositionally biased region" description="Low complexity" evidence="2">
    <location>
        <begin position="595"/>
        <end position="608"/>
    </location>
</feature>
<feature type="compositionally biased region" description="Basic and acidic residues" evidence="2">
    <location>
        <begin position="651"/>
        <end position="663"/>
    </location>
</feature>
<feature type="compositionally biased region" description="Acidic residues" evidence="2">
    <location>
        <begin position="777"/>
        <end position="794"/>
    </location>
</feature>
<feature type="compositionally biased region" description="Polar residues" evidence="2">
    <location>
        <begin position="886"/>
        <end position="941"/>
    </location>
</feature>
<feature type="compositionally biased region" description="Polar residues" evidence="2">
    <location>
        <begin position="1288"/>
        <end position="1299"/>
    </location>
</feature>
<feature type="compositionally biased region" description="Polar residues" evidence="2">
    <location>
        <begin position="1332"/>
        <end position="1350"/>
    </location>
</feature>
<feature type="compositionally biased region" description="Polar residues" evidence="2">
    <location>
        <begin position="1366"/>
        <end position="1376"/>
    </location>
</feature>
<feature type="compositionally biased region" description="Polar residues" evidence="2">
    <location>
        <begin position="1457"/>
        <end position="1469"/>
    </location>
</feature>
<feature type="compositionally biased region" description="Low complexity" evidence="2">
    <location>
        <begin position="1502"/>
        <end position="1513"/>
    </location>
</feature>
<feature type="compositionally biased region" description="Basic and acidic residues" evidence="2">
    <location>
        <begin position="1542"/>
        <end position="1552"/>
    </location>
</feature>
<feature type="sequence variant" id="VAR_061243" description="In dbSNP:rs5910522.">
    <original>G</original>
    <variation>V</variation>
    <location>
        <position position="103"/>
    </location>
</feature>
<feature type="sequence variant" id="VAR_076260" description="In dbSNP:rs201254782." evidence="3">
    <original>V</original>
    <variation>F</variation>
    <location>
        <position position="208"/>
    </location>
</feature>
<feature type="sequence variant" id="VAR_061244" description="In dbSNP:rs35613130.">
    <original>L</original>
    <variation>F</variation>
    <location>
        <position position="419"/>
    </location>
</feature>
<feature type="sequence variant" id="VAR_061245" description="In dbSNP:rs7063611.">
    <original>P</original>
    <variation>A</variation>
    <location>
        <position position="844"/>
    </location>
</feature>
<feature type="sequence variant" id="VAR_061246" description="In dbSNP:rs7050904.">
    <original>E</original>
    <variation>A</variation>
    <location>
        <position position="852"/>
    </location>
</feature>
<feature type="sequence variant" id="VAR_061247" description="In dbSNP:rs3761592.">
    <original>I</original>
    <variation>F</variation>
    <location>
        <position position="945"/>
    </location>
</feature>
<feature type="sequence variant" id="VAR_061248" description="In dbSNP:rs17335909.">
    <original>R</original>
    <variation>W</variation>
    <location>
        <position position="1032"/>
    </location>
</feature>
<feature type="sequence variant" id="VAR_077001" description="In dbSNP:rs1927103996." evidence="4">
    <original>Q</original>
    <variation>E</variation>
    <location>
        <position position="1568"/>
    </location>
</feature>
<feature type="sequence variant" id="VAR_061249" description="In dbSNP:rs2305570.">
    <original>E</original>
    <variation>G</variation>
    <location>
        <position position="1616"/>
    </location>
</feature>
<reference key="1">
    <citation type="journal article" date="2005" name="Nature">
        <title>The DNA sequence of the human X chromosome.</title>
        <authorList>
            <person name="Ross M.T."/>
            <person name="Grafham D.V."/>
            <person name="Coffey A.J."/>
            <person name="Scherer S."/>
            <person name="McLay K."/>
            <person name="Muzny D."/>
            <person name="Platzer M."/>
            <person name="Howell G.R."/>
            <person name="Burrows C."/>
            <person name="Bird C.P."/>
            <person name="Frankish A."/>
            <person name="Lovell F.L."/>
            <person name="Howe K.L."/>
            <person name="Ashurst J.L."/>
            <person name="Fulton R.S."/>
            <person name="Sudbrak R."/>
            <person name="Wen G."/>
            <person name="Jones M.C."/>
            <person name="Hurles M.E."/>
            <person name="Andrews T.D."/>
            <person name="Scott C.E."/>
            <person name="Searle S."/>
            <person name="Ramser J."/>
            <person name="Whittaker A."/>
            <person name="Deadman R."/>
            <person name="Carter N.P."/>
            <person name="Hunt S.E."/>
            <person name="Chen R."/>
            <person name="Cree A."/>
            <person name="Gunaratne P."/>
            <person name="Havlak P."/>
            <person name="Hodgson A."/>
            <person name="Metzker M.L."/>
            <person name="Richards S."/>
            <person name="Scott G."/>
            <person name="Steffen D."/>
            <person name="Sodergren E."/>
            <person name="Wheeler D.A."/>
            <person name="Worley K.C."/>
            <person name="Ainscough R."/>
            <person name="Ambrose K.D."/>
            <person name="Ansari-Lari M.A."/>
            <person name="Aradhya S."/>
            <person name="Ashwell R.I."/>
            <person name="Babbage A.K."/>
            <person name="Bagguley C.L."/>
            <person name="Ballabio A."/>
            <person name="Banerjee R."/>
            <person name="Barker G.E."/>
            <person name="Barlow K.F."/>
            <person name="Barrett I.P."/>
            <person name="Bates K.N."/>
            <person name="Beare D.M."/>
            <person name="Beasley H."/>
            <person name="Beasley O."/>
            <person name="Beck A."/>
            <person name="Bethel G."/>
            <person name="Blechschmidt K."/>
            <person name="Brady N."/>
            <person name="Bray-Allen S."/>
            <person name="Bridgeman A.M."/>
            <person name="Brown A.J."/>
            <person name="Brown M.J."/>
            <person name="Bonnin D."/>
            <person name="Bruford E.A."/>
            <person name="Buhay C."/>
            <person name="Burch P."/>
            <person name="Burford D."/>
            <person name="Burgess J."/>
            <person name="Burrill W."/>
            <person name="Burton J."/>
            <person name="Bye J.M."/>
            <person name="Carder C."/>
            <person name="Carrel L."/>
            <person name="Chako J."/>
            <person name="Chapman J.C."/>
            <person name="Chavez D."/>
            <person name="Chen E."/>
            <person name="Chen G."/>
            <person name="Chen Y."/>
            <person name="Chen Z."/>
            <person name="Chinault C."/>
            <person name="Ciccodicola A."/>
            <person name="Clark S.Y."/>
            <person name="Clarke G."/>
            <person name="Clee C.M."/>
            <person name="Clegg S."/>
            <person name="Clerc-Blankenburg K."/>
            <person name="Clifford K."/>
            <person name="Cobley V."/>
            <person name="Cole C.G."/>
            <person name="Conquer J.S."/>
            <person name="Corby N."/>
            <person name="Connor R.E."/>
            <person name="David R."/>
            <person name="Davies J."/>
            <person name="Davis C."/>
            <person name="Davis J."/>
            <person name="Delgado O."/>
            <person name="Deshazo D."/>
            <person name="Dhami P."/>
            <person name="Ding Y."/>
            <person name="Dinh H."/>
            <person name="Dodsworth S."/>
            <person name="Draper H."/>
            <person name="Dugan-Rocha S."/>
            <person name="Dunham A."/>
            <person name="Dunn M."/>
            <person name="Durbin K.J."/>
            <person name="Dutta I."/>
            <person name="Eades T."/>
            <person name="Ellwood M."/>
            <person name="Emery-Cohen A."/>
            <person name="Errington H."/>
            <person name="Evans K.L."/>
            <person name="Faulkner L."/>
            <person name="Francis F."/>
            <person name="Frankland J."/>
            <person name="Fraser A.E."/>
            <person name="Galgoczy P."/>
            <person name="Gilbert J."/>
            <person name="Gill R."/>
            <person name="Gloeckner G."/>
            <person name="Gregory S.G."/>
            <person name="Gribble S."/>
            <person name="Griffiths C."/>
            <person name="Grocock R."/>
            <person name="Gu Y."/>
            <person name="Gwilliam R."/>
            <person name="Hamilton C."/>
            <person name="Hart E.A."/>
            <person name="Hawes A."/>
            <person name="Heath P.D."/>
            <person name="Heitmann K."/>
            <person name="Hennig S."/>
            <person name="Hernandez J."/>
            <person name="Hinzmann B."/>
            <person name="Ho S."/>
            <person name="Hoffs M."/>
            <person name="Howden P.J."/>
            <person name="Huckle E.J."/>
            <person name="Hume J."/>
            <person name="Hunt P.J."/>
            <person name="Hunt A.R."/>
            <person name="Isherwood J."/>
            <person name="Jacob L."/>
            <person name="Johnson D."/>
            <person name="Jones S."/>
            <person name="de Jong P.J."/>
            <person name="Joseph S.S."/>
            <person name="Keenan S."/>
            <person name="Kelly S."/>
            <person name="Kershaw J.K."/>
            <person name="Khan Z."/>
            <person name="Kioschis P."/>
            <person name="Klages S."/>
            <person name="Knights A.J."/>
            <person name="Kosiura A."/>
            <person name="Kovar-Smith C."/>
            <person name="Laird G.K."/>
            <person name="Langford C."/>
            <person name="Lawlor S."/>
            <person name="Leversha M."/>
            <person name="Lewis L."/>
            <person name="Liu W."/>
            <person name="Lloyd C."/>
            <person name="Lloyd D.M."/>
            <person name="Loulseged H."/>
            <person name="Loveland J.E."/>
            <person name="Lovell J.D."/>
            <person name="Lozado R."/>
            <person name="Lu J."/>
            <person name="Lyne R."/>
            <person name="Ma J."/>
            <person name="Maheshwari M."/>
            <person name="Matthews L.H."/>
            <person name="McDowall J."/>
            <person name="McLaren S."/>
            <person name="McMurray A."/>
            <person name="Meidl P."/>
            <person name="Meitinger T."/>
            <person name="Milne S."/>
            <person name="Miner G."/>
            <person name="Mistry S.L."/>
            <person name="Morgan M."/>
            <person name="Morris S."/>
            <person name="Mueller I."/>
            <person name="Mullikin J.C."/>
            <person name="Nguyen N."/>
            <person name="Nordsiek G."/>
            <person name="Nyakatura G."/>
            <person name="O'dell C.N."/>
            <person name="Okwuonu G."/>
            <person name="Palmer S."/>
            <person name="Pandian R."/>
            <person name="Parker D."/>
            <person name="Parrish J."/>
            <person name="Pasternak S."/>
            <person name="Patel D."/>
            <person name="Pearce A.V."/>
            <person name="Pearson D.M."/>
            <person name="Pelan S.E."/>
            <person name="Perez L."/>
            <person name="Porter K.M."/>
            <person name="Ramsey Y."/>
            <person name="Reichwald K."/>
            <person name="Rhodes S."/>
            <person name="Ridler K.A."/>
            <person name="Schlessinger D."/>
            <person name="Schueler M.G."/>
            <person name="Sehra H.K."/>
            <person name="Shaw-Smith C."/>
            <person name="Shen H."/>
            <person name="Sheridan E.M."/>
            <person name="Shownkeen R."/>
            <person name="Skuce C.D."/>
            <person name="Smith M.L."/>
            <person name="Sotheran E.C."/>
            <person name="Steingruber H.E."/>
            <person name="Steward C.A."/>
            <person name="Storey R."/>
            <person name="Swann R.M."/>
            <person name="Swarbreck D."/>
            <person name="Tabor P.E."/>
            <person name="Taudien S."/>
            <person name="Taylor T."/>
            <person name="Teague B."/>
            <person name="Thomas K."/>
            <person name="Thorpe A."/>
            <person name="Timms K."/>
            <person name="Tracey A."/>
            <person name="Trevanion S."/>
            <person name="Tromans A.C."/>
            <person name="d'Urso M."/>
            <person name="Verduzco D."/>
            <person name="Villasana D."/>
            <person name="Waldron L."/>
            <person name="Wall M."/>
            <person name="Wang Q."/>
            <person name="Warren J."/>
            <person name="Warry G.L."/>
            <person name="Wei X."/>
            <person name="West A."/>
            <person name="Whitehead S.L."/>
            <person name="Whiteley M.N."/>
            <person name="Wilkinson J.E."/>
            <person name="Willey D.L."/>
            <person name="Williams G."/>
            <person name="Williams L."/>
            <person name="Williamson A."/>
            <person name="Williamson H."/>
            <person name="Wilming L."/>
            <person name="Woodmansey R.L."/>
            <person name="Wray P.W."/>
            <person name="Yen J."/>
            <person name="Zhang J."/>
            <person name="Zhou J."/>
            <person name="Zoghbi H."/>
            <person name="Zorilla S."/>
            <person name="Buck D."/>
            <person name="Reinhardt R."/>
            <person name="Poustka A."/>
            <person name="Rosenthal A."/>
            <person name="Lehrach H."/>
            <person name="Meindl A."/>
            <person name="Minx P.J."/>
            <person name="Hillier L.W."/>
            <person name="Willard H.F."/>
            <person name="Wilson R.K."/>
            <person name="Waterston R.H."/>
            <person name="Rice C.M."/>
            <person name="Vaudin M."/>
            <person name="Coulson A."/>
            <person name="Nelson D.L."/>
            <person name="Weinstock G."/>
            <person name="Sulston J.E."/>
            <person name="Durbin R.M."/>
            <person name="Hubbard T."/>
            <person name="Gibbs R.A."/>
            <person name="Beck S."/>
            <person name="Rogers J."/>
            <person name="Bentley D.R."/>
        </authorList>
    </citation>
    <scope>NUCLEOTIDE SEQUENCE [LARGE SCALE GENOMIC DNA]</scope>
</reference>
<reference key="2">
    <citation type="journal article" date="1999" name="DNA Res.">
        <title>Prediction of the coding sequences of unidentified human genes. XV. The complete sequences of 100 new cDNA clones from brain which code for large proteins in vitro.</title>
        <authorList>
            <person name="Nagase T."/>
            <person name="Ishikawa K."/>
            <person name="Kikuno R."/>
            <person name="Hirosawa M."/>
            <person name="Nomura N."/>
            <person name="Ohara O."/>
        </authorList>
    </citation>
    <scope>NUCLEOTIDE SEQUENCE [LARGE SCALE MRNA] OF 595-1709</scope>
    <source>
        <tissue>Brain</tissue>
    </source>
</reference>
<reference key="3">
    <citation type="journal article" date="2012" name="Transl. Psychiatry">
        <title>Analysis of the chromosome X exome in patients with autism spectrum disorders identified novel candidate genes, including TMLHE.</title>
        <authorList>
            <person name="Nava C."/>
            <person name="Lamari F."/>
            <person name="Heron D."/>
            <person name="Mignot C."/>
            <person name="Rastetter A."/>
            <person name="Keren B."/>
            <person name="Cohen D."/>
            <person name="Faudet A."/>
            <person name="Bouteiller D."/>
            <person name="Gilleron M."/>
            <person name="Jacquette A."/>
            <person name="Whalen S."/>
            <person name="Afenjar A."/>
            <person name="Perisse D."/>
            <person name="Laurent C."/>
            <person name="Dupuits C."/>
            <person name="Gautier C."/>
            <person name="Gerard M."/>
            <person name="Huguet G."/>
            <person name="Caillet S."/>
            <person name="Leheup B."/>
            <person name="Leboyer M."/>
            <person name="Gillberg C."/>
            <person name="Delorme R."/>
            <person name="Bourgeron T."/>
            <person name="Brice A."/>
            <person name="Depienne C."/>
        </authorList>
    </citation>
    <scope>VARIANT PHE-208</scope>
</reference>
<reference key="4">
    <citation type="journal article" date="2016" name="Ann. Neurol.">
        <title>ADSSL1 mutation relevant to autosomal recessive adolescent onset distal myopathy.</title>
        <authorList>
            <person name="Park H.J."/>
            <person name="Hong Y.B."/>
            <person name="Choi Y.C."/>
            <person name="Lee J."/>
            <person name="Kim E.J."/>
            <person name="Lee J.S."/>
            <person name="Mo W.M."/>
            <person name="Ki S.M."/>
            <person name="Kim H.I."/>
            <person name="Kim H.J."/>
            <person name="Hyun Y.S."/>
            <person name="Hong H.D."/>
            <person name="Nam K."/>
            <person name="Jung S.C."/>
            <person name="Kim S.B."/>
            <person name="Kim S.H."/>
            <person name="Kim D.H."/>
            <person name="Oh K.W."/>
            <person name="Kim S.H."/>
            <person name="Yoo J.H."/>
            <person name="Lee J.E."/>
            <person name="Chung K.W."/>
            <person name="Choi B.O."/>
        </authorList>
    </citation>
    <scope>VARIANT GLU-1568</scope>
</reference>
<organism>
    <name type="scientific">Homo sapiens</name>
    <name type="common">Human</name>
    <dbReference type="NCBI Taxonomy" id="9606"/>
    <lineage>
        <taxon>Eukaryota</taxon>
        <taxon>Metazoa</taxon>
        <taxon>Chordata</taxon>
        <taxon>Craniata</taxon>
        <taxon>Vertebrata</taxon>
        <taxon>Euteleostomi</taxon>
        <taxon>Mammalia</taxon>
        <taxon>Eutheria</taxon>
        <taxon>Euarchontoglires</taxon>
        <taxon>Primates</taxon>
        <taxon>Haplorrhini</taxon>
        <taxon>Catarrhini</taxon>
        <taxon>Hominidae</taxon>
        <taxon>Homo</taxon>
    </lineage>
</organism>
<proteinExistence type="evidence at protein level"/>
<comment type="subunit">
    <text evidence="1">Interacts with TOP2B.</text>
</comment>
<comment type="subcellular location">
    <subcellularLocation>
        <location evidence="1">Cytoplasmic vesicle</location>
        <location evidence="1">Secretory vesicle</location>
        <location evidence="1">Acrosome</location>
    </subcellularLocation>
    <text evidence="1">Localizes to the sex body in spermatocyte, acrosome, and near the ectoplasmic specialization.</text>
</comment>